<proteinExistence type="inferred from homology"/>
<reference evidence="5" key="1">
    <citation type="journal article" date="2002" name="Nature">
        <title>The genome sequence of Schizosaccharomyces pombe.</title>
        <authorList>
            <person name="Wood V."/>
            <person name="Gwilliam R."/>
            <person name="Rajandream M.A."/>
            <person name="Lyne M.H."/>
            <person name="Lyne R."/>
            <person name="Stewart A."/>
            <person name="Sgouros J.G."/>
            <person name="Peat N."/>
            <person name="Hayles J."/>
            <person name="Baker S.G."/>
            <person name="Basham D."/>
            <person name="Bowman S."/>
            <person name="Brooks K."/>
            <person name="Brown D."/>
            <person name="Brown S."/>
            <person name="Chillingworth T."/>
            <person name="Churcher C.M."/>
            <person name="Collins M."/>
            <person name="Connor R."/>
            <person name="Cronin A."/>
            <person name="Davis P."/>
            <person name="Feltwell T."/>
            <person name="Fraser A."/>
            <person name="Gentles S."/>
            <person name="Goble A."/>
            <person name="Hamlin N."/>
            <person name="Harris D.E."/>
            <person name="Hidalgo J."/>
            <person name="Hodgson G."/>
            <person name="Holroyd S."/>
            <person name="Hornsby T."/>
            <person name="Howarth S."/>
            <person name="Huckle E.J."/>
            <person name="Hunt S."/>
            <person name="Jagels K."/>
            <person name="James K.D."/>
            <person name="Jones L."/>
            <person name="Jones M."/>
            <person name="Leather S."/>
            <person name="McDonald S."/>
            <person name="McLean J."/>
            <person name="Mooney P."/>
            <person name="Moule S."/>
            <person name="Mungall K.L."/>
            <person name="Murphy L.D."/>
            <person name="Niblett D."/>
            <person name="Odell C."/>
            <person name="Oliver K."/>
            <person name="O'Neil S."/>
            <person name="Pearson D."/>
            <person name="Quail M.A."/>
            <person name="Rabbinowitsch E."/>
            <person name="Rutherford K.M."/>
            <person name="Rutter S."/>
            <person name="Saunders D."/>
            <person name="Seeger K."/>
            <person name="Sharp S."/>
            <person name="Skelton J."/>
            <person name="Simmonds M.N."/>
            <person name="Squares R."/>
            <person name="Squares S."/>
            <person name="Stevens K."/>
            <person name="Taylor K."/>
            <person name="Taylor R.G."/>
            <person name="Tivey A."/>
            <person name="Walsh S.V."/>
            <person name="Warren T."/>
            <person name="Whitehead S."/>
            <person name="Woodward J.R."/>
            <person name="Volckaert G."/>
            <person name="Aert R."/>
            <person name="Robben J."/>
            <person name="Grymonprez B."/>
            <person name="Weltjens I."/>
            <person name="Vanstreels E."/>
            <person name="Rieger M."/>
            <person name="Schaefer M."/>
            <person name="Mueller-Auer S."/>
            <person name="Gabel C."/>
            <person name="Fuchs M."/>
            <person name="Duesterhoeft A."/>
            <person name="Fritzc C."/>
            <person name="Holzer E."/>
            <person name="Moestl D."/>
            <person name="Hilbert H."/>
            <person name="Borzym K."/>
            <person name="Langer I."/>
            <person name="Beck A."/>
            <person name="Lehrach H."/>
            <person name="Reinhardt R."/>
            <person name="Pohl T.M."/>
            <person name="Eger P."/>
            <person name="Zimmermann W."/>
            <person name="Wedler H."/>
            <person name="Wambutt R."/>
            <person name="Purnelle B."/>
            <person name="Goffeau A."/>
            <person name="Cadieu E."/>
            <person name="Dreano S."/>
            <person name="Gloux S."/>
            <person name="Lelaure V."/>
            <person name="Mottier S."/>
            <person name="Galibert F."/>
            <person name="Aves S.J."/>
            <person name="Xiang Z."/>
            <person name="Hunt C."/>
            <person name="Moore K."/>
            <person name="Hurst S.M."/>
            <person name="Lucas M."/>
            <person name="Rochet M."/>
            <person name="Gaillardin C."/>
            <person name="Tallada V.A."/>
            <person name="Garzon A."/>
            <person name="Thode G."/>
            <person name="Daga R.R."/>
            <person name="Cruzado L."/>
            <person name="Jimenez J."/>
            <person name="Sanchez M."/>
            <person name="del Rey F."/>
            <person name="Benito J."/>
            <person name="Dominguez A."/>
            <person name="Revuelta J.L."/>
            <person name="Moreno S."/>
            <person name="Armstrong J."/>
            <person name="Forsburg S.L."/>
            <person name="Cerutti L."/>
            <person name="Lowe T."/>
            <person name="McCombie W.R."/>
            <person name="Paulsen I."/>
            <person name="Potashkin J."/>
            <person name="Shpakovski G.V."/>
            <person name="Ussery D."/>
            <person name="Barrell B.G."/>
            <person name="Nurse P."/>
        </authorList>
    </citation>
    <scope>NUCLEOTIDE SEQUENCE [LARGE SCALE GENOMIC DNA]</scope>
    <source>
        <strain>972 / ATCC 24843</strain>
    </source>
</reference>
<reference evidence="4" key="2">
    <citation type="journal article" date="2006" name="Nat. Biotechnol.">
        <title>ORFeome cloning and global analysis of protein localization in the fission yeast Schizosaccharomyces pombe.</title>
        <authorList>
            <person name="Matsuyama A."/>
            <person name="Arai R."/>
            <person name="Yashiroda Y."/>
            <person name="Shirai A."/>
            <person name="Kamata A."/>
            <person name="Sekido S."/>
            <person name="Kobayashi Y."/>
            <person name="Hashimoto A."/>
            <person name="Hamamoto M."/>
            <person name="Hiraoka Y."/>
            <person name="Horinouchi S."/>
            <person name="Yoshida M."/>
        </authorList>
    </citation>
    <scope>SUBCELLULAR LOCATION [LARGE SCALE ANALYSIS]</scope>
</reference>
<evidence type="ECO:0000250" key="1">
    <source>
        <dbReference type="UniProtKB" id="Q12754"/>
    </source>
</evidence>
<evidence type="ECO:0000256" key="2">
    <source>
        <dbReference type="SAM" id="MobiDB-lite"/>
    </source>
</evidence>
<evidence type="ECO:0000269" key="3">
    <source>
    </source>
</evidence>
<evidence type="ECO:0000305" key="4"/>
<evidence type="ECO:0000312" key="5">
    <source>
        <dbReference type="EMBL" id="CAC37426.1"/>
    </source>
</evidence>
<dbReference type="EMBL" id="CU329670">
    <property type="protein sequence ID" value="CAC37426.1"/>
    <property type="molecule type" value="Genomic_DNA"/>
</dbReference>
<dbReference type="RefSeq" id="NP_594781.1">
    <property type="nucleotide sequence ID" value="NM_001020209.2"/>
</dbReference>
<dbReference type="SMR" id="Q9C0X8"/>
<dbReference type="FunCoup" id="Q9C0X8">
    <property type="interactions" value="400"/>
</dbReference>
<dbReference type="STRING" id="284812.Q9C0X8"/>
<dbReference type="iPTMnet" id="Q9C0X8"/>
<dbReference type="PaxDb" id="4896-SPAPB8E5.07c.1"/>
<dbReference type="EnsemblFungi" id="SPAPB8E5.07c.1">
    <property type="protein sequence ID" value="SPAPB8E5.07c.1:pep"/>
    <property type="gene ID" value="SPAPB8E5.07c"/>
</dbReference>
<dbReference type="GeneID" id="2543238"/>
<dbReference type="KEGG" id="spo:2543238"/>
<dbReference type="PomBase" id="SPAPB8E5.07c">
    <property type="gene designation" value="rrp12"/>
</dbReference>
<dbReference type="VEuPathDB" id="FungiDB:SPAPB8E5.07c"/>
<dbReference type="eggNOG" id="KOG1248">
    <property type="taxonomic scope" value="Eukaryota"/>
</dbReference>
<dbReference type="HOGENOM" id="CLU_003753_1_0_1"/>
<dbReference type="InParanoid" id="Q9C0X8"/>
<dbReference type="OMA" id="PDQMKHR"/>
<dbReference type="PhylomeDB" id="Q9C0X8"/>
<dbReference type="PRO" id="PR:Q9C0X8"/>
<dbReference type="Proteomes" id="UP000002485">
    <property type="component" value="Chromosome I"/>
</dbReference>
<dbReference type="GO" id="GO:0005737">
    <property type="term" value="C:cytoplasm"/>
    <property type="evidence" value="ECO:0007669"/>
    <property type="project" value="UniProtKB-KW"/>
</dbReference>
<dbReference type="GO" id="GO:0005730">
    <property type="term" value="C:nucleolus"/>
    <property type="evidence" value="ECO:0000318"/>
    <property type="project" value="GO_Central"/>
</dbReference>
<dbReference type="GO" id="GO:0005634">
    <property type="term" value="C:nucleus"/>
    <property type="evidence" value="ECO:0007005"/>
    <property type="project" value="PomBase"/>
</dbReference>
<dbReference type="GO" id="GO:0005816">
    <property type="term" value="C:spindle pole body"/>
    <property type="evidence" value="ECO:0007669"/>
    <property type="project" value="UniProtKB-SubCell"/>
</dbReference>
<dbReference type="GO" id="GO:0003723">
    <property type="term" value="F:RNA binding"/>
    <property type="evidence" value="ECO:0000318"/>
    <property type="project" value="GO_Central"/>
</dbReference>
<dbReference type="GO" id="GO:0030490">
    <property type="term" value="P:maturation of SSU-rRNA"/>
    <property type="evidence" value="ECO:0000266"/>
    <property type="project" value="PomBase"/>
</dbReference>
<dbReference type="Gene3D" id="1.25.10.10">
    <property type="entry name" value="Leucine-rich Repeat Variant"/>
    <property type="match status" value="2"/>
</dbReference>
<dbReference type="InterPro" id="IPR011989">
    <property type="entry name" value="ARM-like"/>
</dbReference>
<dbReference type="InterPro" id="IPR016024">
    <property type="entry name" value="ARM-type_fold"/>
</dbReference>
<dbReference type="InterPro" id="IPR052087">
    <property type="entry name" value="RRP12"/>
</dbReference>
<dbReference type="InterPro" id="IPR012978">
    <property type="entry name" value="RRP12-like_dom"/>
</dbReference>
<dbReference type="PANTHER" id="PTHR48287">
    <property type="entry name" value="ARM REPEAT SUPERFAMILY PROTEIN"/>
    <property type="match status" value="1"/>
</dbReference>
<dbReference type="PANTHER" id="PTHR48287:SF1">
    <property type="entry name" value="ARM REPEAT SUPERFAMILY PROTEIN"/>
    <property type="match status" value="1"/>
</dbReference>
<dbReference type="Pfam" id="PF08161">
    <property type="entry name" value="RRP12_HEAT"/>
    <property type="match status" value="1"/>
</dbReference>
<dbReference type="SUPFAM" id="SSF48371">
    <property type="entry name" value="ARM repeat"/>
    <property type="match status" value="1"/>
</dbReference>
<gene>
    <name type="primary">rrp12</name>
    <name type="ORF">SPAPB8E5.07c</name>
</gene>
<protein>
    <recommendedName>
        <fullName>Putative ribosomal RNA-processing protein 12</fullName>
    </recommendedName>
</protein>
<keyword id="KW-0963">Cytoplasm</keyword>
<keyword id="KW-0206">Cytoskeleton</keyword>
<keyword id="KW-0539">Nucleus</keyword>
<keyword id="KW-1185">Reference proteome</keyword>
<keyword id="KW-0690">Ribosome biogenesis</keyword>
<sequence>MAEVNEPLQIELRKIRNSSTAGVINEFDVIVSAVEGTLKEQKTEATPTAYLVALLTLVKEFTDLKKNFKGHTFQLLELVIKYVPSNVLQAKFPQILSVLAPVVNNAETNKTVLLPYLNVLEKLLLLQDYSSWTHGNSCKTSIYILLFFALSNTEKTRVRSLQILANILKNPPAGPVTEHPAIKYTAFEPLRLLESLATAKKPKTPAEVQKLNNSLVLIRVLCSSTHWPMTLVERLCRSCVLIVGQRSTNSILLVYQILDGLSKKSVDYTDAVSLRMTLICLQKLEPSEHDPILMVGWLKAMNTAIRAFNILDKETAKYECLHRFKAFFTLLESESMEIRLQTATTICSVIGCLDTTPNSFAVVEEICSFICDALRDIRFRLAYPECFQIISSLCDKLGPHSDPYLIPALEVIDYLRGSEGFDGKALVDEAIGSFVRAIGPEAMLRVLPLNLELNDKDAVGRAWLLPVLRDNIRFANLAHFTNYFVPLSGQLYQKVIEMNDLDSIPSKLLQTLVDQIWSLLPGYCYLPLDLQSSFTLEFASILVNVLYEQVSLRSVICNSLTALVETNSKVADKLPLDDVISVPVSASDASSNLAFLTNMSSNFLSVLLNVFSSTPSQYRYPILKCIQTWIFISSNDTIHSVYKKVTDLLPDSLNDLAGSFNIAADGISSPMAYSLIDLLIVISPYLNQDYAVTLFEYVHEFLRHVNPAIQKKGYKLLGTLLRVDYGKAYATQHVKEIFEELSSVADRVVSSTRKDRLASLNALYELQSSELVIAIPQLLPEAIISLKEVNEKARHTAFQLLFNIAKSAVNSVEFGNSKPERVEKFVSVISAGLAGSSTHMISATIIAISSIVMEYKVFISEPFLVQLISTLNLFITSSKREIAKAAIDFIKISVSSFPVECIKPLLPELIPNLLAWSHEGKANLRVKVRHLFEKMGRKYGIAEIEPFFPAEDKKLITNIRKTQERNIRKRAMKRDPAKPSSAQPRKTFASAYEAAVYDTDDEAEEEFENDEMNNGNGGDLRMDEAFVQEDNDEEPLDLLDIEAVSKISSTDPRKKLAARKQKLNSAFKSNEEGRLLINDSDEDELIEDSLANAQQHAEVNRTYLEAVAGKESFRRGLNNRVKFSNKRVRDDYDEEMEEVEVPEVTRKPAKQKFDRKQRGQKGY</sequence>
<accession>Q9C0X8</accession>
<name>RRP12_SCHPO</name>
<feature type="chain" id="PRO_0000273518" description="Putative ribosomal RNA-processing protein 12">
    <location>
        <begin position="1"/>
        <end position="1163"/>
    </location>
</feature>
<feature type="region of interest" description="Disordered" evidence="2">
    <location>
        <begin position="1127"/>
        <end position="1163"/>
    </location>
</feature>
<feature type="compositionally biased region" description="Acidic residues" evidence="2">
    <location>
        <begin position="1131"/>
        <end position="1141"/>
    </location>
</feature>
<feature type="compositionally biased region" description="Basic and acidic residues" evidence="2">
    <location>
        <begin position="1143"/>
        <end position="1157"/>
    </location>
</feature>
<organism>
    <name type="scientific">Schizosaccharomyces pombe (strain 972 / ATCC 24843)</name>
    <name type="common">Fission yeast</name>
    <dbReference type="NCBI Taxonomy" id="284812"/>
    <lineage>
        <taxon>Eukaryota</taxon>
        <taxon>Fungi</taxon>
        <taxon>Dikarya</taxon>
        <taxon>Ascomycota</taxon>
        <taxon>Taphrinomycotina</taxon>
        <taxon>Schizosaccharomycetes</taxon>
        <taxon>Schizosaccharomycetales</taxon>
        <taxon>Schizosaccharomycetaceae</taxon>
        <taxon>Schizosaccharomyces</taxon>
    </lineage>
</organism>
<comment type="function">
    <text evidence="1">Required for nuclear export of the ribosomal subunits. Required for maturation of the RNA components of pre-ribosomes (By similarity).</text>
</comment>
<comment type="subcellular location">
    <subcellularLocation>
        <location evidence="3">Nucleus</location>
    </subcellularLocation>
    <subcellularLocation>
        <location evidence="3">Cytoplasm</location>
        <location evidence="3">Cytoskeleton</location>
        <location evidence="3">Microtubule organizing center</location>
        <location evidence="3">Spindle pole body</location>
    </subcellularLocation>
</comment>
<comment type="similarity">
    <text evidence="1">Belongs to the RRP12 family.</text>
</comment>